<comment type="function">
    <text evidence="1">Plays a role in mediating bacterial evasion from the host autophagic pathway.</text>
</comment>
<comment type="subcellular location">
    <subcellularLocation>
        <location evidence="1">Secreted</location>
    </subcellularLocation>
    <text evidence="1">Secreted via the bsa type III secretion system.</text>
</comment>
<comment type="similarity">
    <text evidence="3">Belongs to the BopA/IcsB family.</text>
</comment>
<name>BOPA_BURP1</name>
<protein>
    <recommendedName>
        <fullName>Effector protein BopA</fullName>
    </recommendedName>
</protein>
<gene>
    <name type="primary">bopA</name>
    <name type="ordered locus">BURPS1710b_A0562</name>
</gene>
<feature type="chain" id="PRO_0000344024" description="Effector protein BopA">
    <location>
        <begin position="1"/>
        <end position="512"/>
    </location>
</feature>
<feature type="coiled-coil region" evidence="2">
    <location>
        <begin position="347"/>
        <end position="377"/>
    </location>
</feature>
<organism>
    <name type="scientific">Burkholderia pseudomallei (strain 1710b)</name>
    <dbReference type="NCBI Taxonomy" id="320372"/>
    <lineage>
        <taxon>Bacteria</taxon>
        <taxon>Pseudomonadati</taxon>
        <taxon>Pseudomonadota</taxon>
        <taxon>Betaproteobacteria</taxon>
        <taxon>Burkholderiales</taxon>
        <taxon>Burkholderiaceae</taxon>
        <taxon>Burkholderia</taxon>
        <taxon>pseudomallei group</taxon>
    </lineage>
</organism>
<sequence>MINVDAFVASARSGARVVVGGDARGPVVSAARLGMKERLFAFLAHVPLLKHCDAVRRYAEQVRMENRRSLEVFVLALSKRYGPEGAKAAFDYGARRDGAPLDQRRVRNMVSIAEHFHGTGDAKPLARQMVFRSWECRGLDHPGHASLTIKNQADADAGRHVYEHVSWWPNQRLGSKEHFDRIEPKTLDGYRIDKRSEISSATEQRLREGDAARRKILADGFKYANQDERHDARFFPRAGQKLDKDAEWGLSARKVYFPAIGFNHDRRDTDRPRAFVLFGLNEAAMLRDARTVKEGAKSGELMYQMISKKENCASMALRVLRAGGAEHFVPYTAAWISEDPNHAHAYALAVQARIDALNQRRADVERRCERLRDSASVRQAWRAFSEAGGASASPLAEDAGRGRASAHMRQARLDEHAREVERIGAYFAELSAGRSGKHRDRADAALADAMKRCAPSARDDVAALTRKASVLVETLGRHLDAPPPSDSSALRRLAAHAMIGRIEAFMAAAIAA</sequence>
<accession>Q3JL32</accession>
<keyword id="KW-0175">Coiled coil</keyword>
<keyword id="KW-0964">Secreted</keyword>
<keyword id="KW-0843">Virulence</keyword>
<evidence type="ECO:0000250" key="1"/>
<evidence type="ECO:0000255" key="2"/>
<evidence type="ECO:0000305" key="3"/>
<reference key="1">
    <citation type="journal article" date="2010" name="Genome Biol. Evol.">
        <title>Continuing evolution of Burkholderia mallei through genome reduction and large-scale rearrangements.</title>
        <authorList>
            <person name="Losada L."/>
            <person name="Ronning C.M."/>
            <person name="DeShazer D."/>
            <person name="Woods D."/>
            <person name="Fedorova N."/>
            <person name="Kim H.S."/>
            <person name="Shabalina S.A."/>
            <person name="Pearson T.R."/>
            <person name="Brinkac L."/>
            <person name="Tan P."/>
            <person name="Nandi T."/>
            <person name="Crabtree J."/>
            <person name="Badger J."/>
            <person name="Beckstrom-Sternberg S."/>
            <person name="Saqib M."/>
            <person name="Schutzer S.E."/>
            <person name="Keim P."/>
            <person name="Nierman W.C."/>
        </authorList>
    </citation>
    <scope>NUCLEOTIDE SEQUENCE [LARGE SCALE GENOMIC DNA]</scope>
    <source>
        <strain>1710b</strain>
    </source>
</reference>
<dbReference type="EMBL" id="CP000125">
    <property type="protein sequence ID" value="ABA51593.1"/>
    <property type="molecule type" value="Genomic_DNA"/>
</dbReference>
<dbReference type="RefSeq" id="WP_004528810.1">
    <property type="nucleotide sequence ID" value="NC_007435.1"/>
</dbReference>
<dbReference type="EnsemblBacteria" id="ABA51593">
    <property type="protein sequence ID" value="ABA51593"/>
    <property type="gene ID" value="BURPS1710b_A0562"/>
</dbReference>
<dbReference type="KEGG" id="bpm:BURPS1710b_A0562"/>
<dbReference type="HOGENOM" id="CLU_531773_0_0_4"/>
<dbReference type="Proteomes" id="UP000002700">
    <property type="component" value="Chromosome II"/>
</dbReference>
<dbReference type="GO" id="GO:0005615">
    <property type="term" value="C:extracellular space"/>
    <property type="evidence" value="ECO:0007669"/>
    <property type="project" value="InterPro"/>
</dbReference>
<dbReference type="Gene3D" id="4.10.1330.10">
    <property type="entry name" value="non globular Virulence effector SptP domain"/>
    <property type="match status" value="1"/>
</dbReference>
<dbReference type="InterPro" id="IPR011070">
    <property type="entry name" value="Globular_prot_asu/bsu"/>
</dbReference>
<dbReference type="InterPro" id="IPR015203">
    <property type="entry name" value="SptP_N"/>
</dbReference>
<dbReference type="InterPro" id="IPR044899">
    <property type="entry name" value="SptP_N_sf"/>
</dbReference>
<dbReference type="Pfam" id="PF09119">
    <property type="entry name" value="SicP-binding"/>
    <property type="match status" value="1"/>
</dbReference>
<dbReference type="SUPFAM" id="SSF56568">
    <property type="entry name" value="Non-globular alpha+beta subunits of globular proteins"/>
    <property type="match status" value="1"/>
</dbReference>
<proteinExistence type="inferred from homology"/>